<protein>
    <recommendedName>
        <fullName>Putative uncharacterized protein YLR161W</fullName>
    </recommendedName>
</protein>
<proteinExistence type="predicted"/>
<keyword id="KW-1185">Reference proteome</keyword>
<comment type="miscellaneous">
    <text>There are 3 tandem-duplicated genes coding for this protein in S.cerevisiae (YLR156W, YLR159W and YLR161W). Additionally, a fourth copy has been disrupted by a Ty1 retrotransposon, which led to the prediction of the 2 dubious ORFs YLR157W-D and YLR157W-E.</text>
</comment>
<gene>
    <name type="ordered locus">YLR161W</name>
    <name type="ORF">L9632.5</name>
</gene>
<sequence>MKFQYALAKEQLGSNSRSGVKKLISKHHWLPEYYFSDLSFSVVQQWDSRAIEKTTIISCMRPANQEIYPLRHCETLRSQPCSLFSSLYARSFQSSCTLHVAEPSPGFHMYGCHT</sequence>
<organism>
    <name type="scientific">Saccharomyces cerevisiae (strain ATCC 204508 / S288c)</name>
    <name type="common">Baker's yeast</name>
    <dbReference type="NCBI Taxonomy" id="559292"/>
    <lineage>
        <taxon>Eukaryota</taxon>
        <taxon>Fungi</taxon>
        <taxon>Dikarya</taxon>
        <taxon>Ascomycota</taxon>
        <taxon>Saccharomycotina</taxon>
        <taxon>Saccharomycetes</taxon>
        <taxon>Saccharomycetales</taxon>
        <taxon>Saccharomycetaceae</taxon>
        <taxon>Saccharomyces</taxon>
    </lineage>
</organism>
<accession>P0CE98</accession>
<accession>D6VYF4</accession>
<accession>Q12478</accession>
<accession>Q8TGJ5</accession>
<accession>Q8TGJ6</accession>
<feature type="chain" id="PRO_0000393296" description="Putative uncharacterized protein YLR161W">
    <location>
        <begin position="1"/>
        <end position="114"/>
    </location>
</feature>
<reference key="1">
    <citation type="journal article" date="1997" name="Nature">
        <title>The nucleotide sequence of Saccharomyces cerevisiae chromosome XII.</title>
        <authorList>
            <person name="Johnston M."/>
            <person name="Hillier L.W."/>
            <person name="Riles L."/>
            <person name="Albermann K."/>
            <person name="Andre B."/>
            <person name="Ansorge W."/>
            <person name="Benes V."/>
            <person name="Brueckner M."/>
            <person name="Delius H."/>
            <person name="Dubois E."/>
            <person name="Duesterhoeft A."/>
            <person name="Entian K.-D."/>
            <person name="Floeth M."/>
            <person name="Goffeau A."/>
            <person name="Hebling U."/>
            <person name="Heumann K."/>
            <person name="Heuss-Neitzel D."/>
            <person name="Hilbert H."/>
            <person name="Hilger F."/>
            <person name="Kleine K."/>
            <person name="Koetter P."/>
            <person name="Louis E.J."/>
            <person name="Messenguy F."/>
            <person name="Mewes H.-W."/>
            <person name="Miosga T."/>
            <person name="Moestl D."/>
            <person name="Mueller-Auer S."/>
            <person name="Nentwich U."/>
            <person name="Obermaier B."/>
            <person name="Piravandi E."/>
            <person name="Pohl T.M."/>
            <person name="Portetelle D."/>
            <person name="Purnelle B."/>
            <person name="Rechmann S."/>
            <person name="Rieger M."/>
            <person name="Rinke M."/>
            <person name="Rose M."/>
            <person name="Scharfe M."/>
            <person name="Scherens B."/>
            <person name="Scholler P."/>
            <person name="Schwager C."/>
            <person name="Schwarz S."/>
            <person name="Underwood A.P."/>
            <person name="Urrestarazu L.A."/>
            <person name="Vandenbol M."/>
            <person name="Verhasselt P."/>
            <person name="Vierendeels F."/>
            <person name="Voet M."/>
            <person name="Volckaert G."/>
            <person name="Voss H."/>
            <person name="Wambutt R."/>
            <person name="Wedler E."/>
            <person name="Wedler H."/>
            <person name="Zimmermann F.K."/>
            <person name="Zollner A."/>
            <person name="Hani J."/>
            <person name="Hoheisel J.D."/>
        </authorList>
    </citation>
    <scope>NUCLEOTIDE SEQUENCE [LARGE SCALE GENOMIC DNA]</scope>
    <source>
        <strain>ATCC 204508 / S288c</strain>
    </source>
</reference>
<reference key="2">
    <citation type="journal article" date="2014" name="G3 (Bethesda)">
        <title>The reference genome sequence of Saccharomyces cerevisiae: Then and now.</title>
        <authorList>
            <person name="Engel S.R."/>
            <person name="Dietrich F.S."/>
            <person name="Fisk D.G."/>
            <person name="Binkley G."/>
            <person name="Balakrishnan R."/>
            <person name="Costanzo M.C."/>
            <person name="Dwight S.S."/>
            <person name="Hitz B.C."/>
            <person name="Karra K."/>
            <person name="Nash R.S."/>
            <person name="Weng S."/>
            <person name="Wong E.D."/>
            <person name="Lloyd P."/>
            <person name="Skrzypek M.S."/>
            <person name="Miyasato S.R."/>
            <person name="Simison M."/>
            <person name="Cherry J.M."/>
        </authorList>
    </citation>
    <scope>GENOME REANNOTATION</scope>
    <source>
        <strain>ATCC 204508 / S288c</strain>
    </source>
</reference>
<name>YL161_YEAST</name>
<dbReference type="EMBL" id="U51921">
    <property type="protein sequence ID" value="AAB67485.1"/>
    <property type="molecule type" value="Genomic_DNA"/>
</dbReference>
<dbReference type="EMBL" id="BK006945">
    <property type="protein sequence ID" value="DAA09482.1"/>
    <property type="molecule type" value="Genomic_DNA"/>
</dbReference>
<dbReference type="PIR" id="S68472">
    <property type="entry name" value="S68472"/>
</dbReference>
<dbReference type="RefSeq" id="NP_757337.1">
    <property type="nucleotide sequence ID" value="NM_001182043.1"/>
</dbReference>
<dbReference type="RefSeq" id="NP_757338.1">
    <property type="nucleotide sequence ID" value="NM_001182046.1"/>
</dbReference>
<dbReference type="RefSeq" id="NP_757339.1">
    <property type="nucleotide sequence ID" value="NM_001182048.1"/>
</dbReference>
<dbReference type="BioGRID" id="31427">
    <property type="interactions" value="30"/>
</dbReference>
<dbReference type="BioGRID" id="31432">
    <property type="interactions" value="43"/>
</dbReference>
<dbReference type="BioGRID" id="31434">
    <property type="interactions" value="2"/>
</dbReference>
<dbReference type="FunCoup" id="P0CE98">
    <property type="interactions" value="92"/>
</dbReference>
<dbReference type="EnsemblFungi" id="YLR156W_mRNA">
    <property type="protein sequence ID" value="YLR156W"/>
    <property type="gene ID" value="YLR156W"/>
</dbReference>
<dbReference type="EnsemblFungi" id="YLR159W_mRNA">
    <property type="protein sequence ID" value="YLR159W"/>
    <property type="gene ID" value="YLR159W"/>
</dbReference>
<dbReference type="EnsemblFungi" id="YLR161W_mRNA">
    <property type="protein sequence ID" value="YLR161W"/>
    <property type="gene ID" value="YLR161W"/>
</dbReference>
<dbReference type="GeneID" id="850858"/>
<dbReference type="KEGG" id="sce:YLR156W"/>
<dbReference type="KEGG" id="sce:YLR159W"/>
<dbReference type="KEGG" id="sce:YLR161W"/>
<dbReference type="AGR" id="SGD:S000004151"/>
<dbReference type="SGD" id="S000004151">
    <property type="gene designation" value="YLR161W"/>
</dbReference>
<dbReference type="VEuPathDB" id="FungiDB:YLR156W"/>
<dbReference type="VEuPathDB" id="FungiDB:YLR159W"/>
<dbReference type="VEuPathDB" id="FungiDB:YLR161W"/>
<dbReference type="GeneTree" id="ENSGT00940000178389"/>
<dbReference type="HOGENOM" id="CLU_2122988_0_0_1"/>
<dbReference type="InParanoid" id="P0CE98"/>
<dbReference type="BioCyc" id="YEAST:G3O-32291-MONOMER"/>
<dbReference type="PRO" id="PR:P0CE98"/>
<dbReference type="Proteomes" id="UP000002311">
    <property type="component" value="Chromosome XII"/>
</dbReference>
<dbReference type="RNAct" id="P0CE98">
    <property type="molecule type" value="protein"/>
</dbReference>
<dbReference type="ExpressionAtlas" id="P0CE98">
    <property type="expression patterns" value="baseline"/>
</dbReference>